<protein>
    <recommendedName>
        <fullName evidence="1">dCTP deaminase</fullName>
        <ecNumber evidence="1">3.5.4.13</ecNumber>
    </recommendedName>
    <alternativeName>
        <fullName evidence="1">Deoxycytidine triphosphate deaminase</fullName>
    </alternativeName>
</protein>
<feature type="chain" id="PRO_1000009790" description="dCTP deaminase">
    <location>
        <begin position="1"/>
        <end position="191"/>
    </location>
</feature>
<feature type="active site" description="Proton donor/acceptor" evidence="1">
    <location>
        <position position="138"/>
    </location>
</feature>
<feature type="binding site" evidence="1">
    <location>
        <begin position="112"/>
        <end position="117"/>
    </location>
    <ligand>
        <name>dCTP</name>
        <dbReference type="ChEBI" id="CHEBI:61481"/>
    </ligand>
</feature>
<feature type="binding site" evidence="1">
    <location>
        <begin position="136"/>
        <end position="138"/>
    </location>
    <ligand>
        <name>dCTP</name>
        <dbReference type="ChEBI" id="CHEBI:61481"/>
    </ligand>
</feature>
<feature type="binding site" evidence="1">
    <location>
        <position position="157"/>
    </location>
    <ligand>
        <name>dCTP</name>
        <dbReference type="ChEBI" id="CHEBI:61481"/>
    </ligand>
</feature>
<feature type="binding site" evidence="1">
    <location>
        <position position="173"/>
    </location>
    <ligand>
        <name>dCTP</name>
        <dbReference type="ChEBI" id="CHEBI:61481"/>
    </ligand>
</feature>
<feature type="binding site" evidence="1">
    <location>
        <position position="183"/>
    </location>
    <ligand>
        <name>dCTP</name>
        <dbReference type="ChEBI" id="CHEBI:61481"/>
    </ligand>
</feature>
<gene>
    <name evidence="1" type="primary">dcd</name>
    <name type="ordered locus">Psyc_1425</name>
</gene>
<organism>
    <name type="scientific">Psychrobacter arcticus (strain DSM 17307 / VKM B-2377 / 273-4)</name>
    <dbReference type="NCBI Taxonomy" id="259536"/>
    <lineage>
        <taxon>Bacteria</taxon>
        <taxon>Pseudomonadati</taxon>
        <taxon>Pseudomonadota</taxon>
        <taxon>Gammaproteobacteria</taxon>
        <taxon>Moraxellales</taxon>
        <taxon>Moraxellaceae</taxon>
        <taxon>Psychrobacter</taxon>
    </lineage>
</organism>
<dbReference type="EC" id="3.5.4.13" evidence="1"/>
<dbReference type="EMBL" id="CP000082">
    <property type="protein sequence ID" value="AAZ19273.1"/>
    <property type="molecule type" value="Genomic_DNA"/>
</dbReference>
<dbReference type="RefSeq" id="WP_011280694.1">
    <property type="nucleotide sequence ID" value="NC_007204.1"/>
</dbReference>
<dbReference type="SMR" id="Q4FRT5"/>
<dbReference type="STRING" id="259536.Psyc_1425"/>
<dbReference type="KEGG" id="par:Psyc_1425"/>
<dbReference type="eggNOG" id="COG0717">
    <property type="taxonomic scope" value="Bacteria"/>
</dbReference>
<dbReference type="HOGENOM" id="CLU_087476_4_0_6"/>
<dbReference type="OrthoDB" id="9780956at2"/>
<dbReference type="UniPathway" id="UPA00610">
    <property type="reaction ID" value="UER00665"/>
</dbReference>
<dbReference type="Proteomes" id="UP000000546">
    <property type="component" value="Chromosome"/>
</dbReference>
<dbReference type="GO" id="GO:0008829">
    <property type="term" value="F:dCTP deaminase activity"/>
    <property type="evidence" value="ECO:0007669"/>
    <property type="project" value="UniProtKB-UniRule"/>
</dbReference>
<dbReference type="GO" id="GO:0000166">
    <property type="term" value="F:nucleotide binding"/>
    <property type="evidence" value="ECO:0007669"/>
    <property type="project" value="UniProtKB-KW"/>
</dbReference>
<dbReference type="GO" id="GO:0006226">
    <property type="term" value="P:dUMP biosynthetic process"/>
    <property type="evidence" value="ECO:0007669"/>
    <property type="project" value="UniProtKB-UniPathway"/>
</dbReference>
<dbReference type="GO" id="GO:0006229">
    <property type="term" value="P:dUTP biosynthetic process"/>
    <property type="evidence" value="ECO:0007669"/>
    <property type="project" value="UniProtKB-UniRule"/>
</dbReference>
<dbReference type="GO" id="GO:0015949">
    <property type="term" value="P:nucleobase-containing small molecule interconversion"/>
    <property type="evidence" value="ECO:0007669"/>
    <property type="project" value="TreeGrafter"/>
</dbReference>
<dbReference type="CDD" id="cd07557">
    <property type="entry name" value="trimeric_dUTPase"/>
    <property type="match status" value="1"/>
</dbReference>
<dbReference type="FunFam" id="2.70.40.10:FF:000001">
    <property type="entry name" value="dCTP deaminase"/>
    <property type="match status" value="1"/>
</dbReference>
<dbReference type="Gene3D" id="2.70.40.10">
    <property type="match status" value="1"/>
</dbReference>
<dbReference type="HAMAP" id="MF_00146">
    <property type="entry name" value="dCTP_deaminase"/>
    <property type="match status" value="1"/>
</dbReference>
<dbReference type="InterPro" id="IPR011962">
    <property type="entry name" value="dCTP_deaminase"/>
</dbReference>
<dbReference type="InterPro" id="IPR036157">
    <property type="entry name" value="dUTPase-like_sf"/>
</dbReference>
<dbReference type="InterPro" id="IPR033704">
    <property type="entry name" value="dUTPase_trimeric"/>
</dbReference>
<dbReference type="NCBIfam" id="TIGR02274">
    <property type="entry name" value="dCTP_deam"/>
    <property type="match status" value="1"/>
</dbReference>
<dbReference type="PANTHER" id="PTHR42680">
    <property type="entry name" value="DCTP DEAMINASE"/>
    <property type="match status" value="1"/>
</dbReference>
<dbReference type="PANTHER" id="PTHR42680:SF3">
    <property type="entry name" value="DCTP DEAMINASE"/>
    <property type="match status" value="1"/>
</dbReference>
<dbReference type="Pfam" id="PF22769">
    <property type="entry name" value="DCD"/>
    <property type="match status" value="1"/>
</dbReference>
<dbReference type="SUPFAM" id="SSF51283">
    <property type="entry name" value="dUTPase-like"/>
    <property type="match status" value="1"/>
</dbReference>
<sequence length="191" mass="21568">MSIKSDRWIRKMAEEHGMIEPFEAGQVRFNDAGERLVSYGTSSYGYDVRCAPEFKVFTNVHSVIVDPKNFDEKSFIDIIGDECIIPPNSFALARTMEYFRIPRDVLTICLGKSTYARCGIIVNVTPLEPEWEGHVTLEFSNTTNLPARIYAGEGVAQMLFFQSDADDVCETSYKDRGGKYQGQRGVTLPRT</sequence>
<reference key="1">
    <citation type="journal article" date="2010" name="Appl. Environ. Microbiol.">
        <title>The genome sequence of Psychrobacter arcticus 273-4, a psychroactive Siberian permafrost bacterium, reveals mechanisms for adaptation to low-temperature growth.</title>
        <authorList>
            <person name="Ayala-del-Rio H.L."/>
            <person name="Chain P.S."/>
            <person name="Grzymski J.J."/>
            <person name="Ponder M.A."/>
            <person name="Ivanova N."/>
            <person name="Bergholz P.W."/>
            <person name="Di Bartolo G."/>
            <person name="Hauser L."/>
            <person name="Land M."/>
            <person name="Bakermans C."/>
            <person name="Rodrigues D."/>
            <person name="Klappenbach J."/>
            <person name="Zarka D."/>
            <person name="Larimer F."/>
            <person name="Richardson P."/>
            <person name="Murray A."/>
            <person name="Thomashow M."/>
            <person name="Tiedje J.M."/>
        </authorList>
    </citation>
    <scope>NUCLEOTIDE SEQUENCE [LARGE SCALE GENOMIC DNA]</scope>
    <source>
        <strain>DSM 17307 / VKM B-2377 / 273-4</strain>
    </source>
</reference>
<comment type="function">
    <text evidence="1">Catalyzes the deamination of dCTP to dUTP.</text>
</comment>
<comment type="catalytic activity">
    <reaction evidence="1">
        <text>dCTP + H2O + H(+) = dUTP + NH4(+)</text>
        <dbReference type="Rhea" id="RHEA:22680"/>
        <dbReference type="ChEBI" id="CHEBI:15377"/>
        <dbReference type="ChEBI" id="CHEBI:15378"/>
        <dbReference type="ChEBI" id="CHEBI:28938"/>
        <dbReference type="ChEBI" id="CHEBI:61481"/>
        <dbReference type="ChEBI" id="CHEBI:61555"/>
        <dbReference type="EC" id="3.5.4.13"/>
    </reaction>
</comment>
<comment type="pathway">
    <text evidence="1">Pyrimidine metabolism; dUMP biosynthesis; dUMP from dCTP (dUTP route): step 1/2.</text>
</comment>
<comment type="subunit">
    <text evidence="1">Homotrimer.</text>
</comment>
<comment type="similarity">
    <text evidence="1">Belongs to the dCTP deaminase family.</text>
</comment>
<keyword id="KW-0378">Hydrolase</keyword>
<keyword id="KW-0546">Nucleotide metabolism</keyword>
<keyword id="KW-0547">Nucleotide-binding</keyword>
<keyword id="KW-1185">Reference proteome</keyword>
<accession>Q4FRT5</accession>
<name>DCD_PSYA2</name>
<proteinExistence type="inferred from homology"/>
<evidence type="ECO:0000255" key="1">
    <source>
        <dbReference type="HAMAP-Rule" id="MF_00146"/>
    </source>
</evidence>